<organism>
    <name type="scientific">Salmonella choleraesuis (strain SC-B67)</name>
    <dbReference type="NCBI Taxonomy" id="321314"/>
    <lineage>
        <taxon>Bacteria</taxon>
        <taxon>Pseudomonadati</taxon>
        <taxon>Pseudomonadota</taxon>
        <taxon>Gammaproteobacteria</taxon>
        <taxon>Enterobacterales</taxon>
        <taxon>Enterobacteriaceae</taxon>
        <taxon>Salmonella</taxon>
    </lineage>
</organism>
<feature type="initiator methionine" description="Removed" evidence="1">
    <location>
        <position position="1"/>
    </location>
</feature>
<feature type="chain" id="PRO_0000292439" description="Macrodomain Ori protein">
    <location>
        <begin position="2"/>
        <end position="112"/>
    </location>
</feature>
<feature type="region of interest" description="Disordered" evidence="3">
    <location>
        <begin position="91"/>
        <end position="112"/>
    </location>
</feature>
<feature type="compositionally biased region" description="Acidic residues" evidence="3">
    <location>
        <begin position="103"/>
        <end position="112"/>
    </location>
</feature>
<name>MAOP_SALCH</name>
<accession>Q57HV1</accession>
<gene>
    <name evidence="2" type="primary">maoP</name>
    <name type="synonym">yifE</name>
    <name type="ordered locus">SCH_3805</name>
</gene>
<reference key="1">
    <citation type="journal article" date="2005" name="Nucleic Acids Res.">
        <title>The genome sequence of Salmonella enterica serovar Choleraesuis, a highly invasive and resistant zoonotic pathogen.</title>
        <authorList>
            <person name="Chiu C.-H."/>
            <person name="Tang P."/>
            <person name="Chu C."/>
            <person name="Hu S."/>
            <person name="Bao Q."/>
            <person name="Yu J."/>
            <person name="Chou Y.-Y."/>
            <person name="Wang H.-S."/>
            <person name="Lee Y.-S."/>
        </authorList>
    </citation>
    <scope>NUCLEOTIDE SEQUENCE [LARGE SCALE GENOMIC DNA]</scope>
    <source>
        <strain>SC-B67</strain>
    </source>
</reference>
<dbReference type="EMBL" id="AE017220">
    <property type="protein sequence ID" value="AAX67711.1"/>
    <property type="molecule type" value="Genomic_DNA"/>
</dbReference>
<dbReference type="KEGG" id="sec:SCH_3805"/>
<dbReference type="HOGENOM" id="CLU_144599_2_2_6"/>
<dbReference type="Proteomes" id="UP000000538">
    <property type="component" value="Chromosome"/>
</dbReference>
<dbReference type="InterPro" id="IPR007335">
    <property type="entry name" value="DUF413"/>
</dbReference>
<dbReference type="NCBIfam" id="NF008251">
    <property type="entry name" value="PRK11027.1-1"/>
    <property type="match status" value="1"/>
</dbReference>
<dbReference type="NCBIfam" id="NF008252">
    <property type="entry name" value="PRK11027.1-2"/>
    <property type="match status" value="1"/>
</dbReference>
<dbReference type="NCBIfam" id="NF008253">
    <property type="entry name" value="PRK11027.1-4"/>
    <property type="match status" value="1"/>
</dbReference>
<dbReference type="Pfam" id="PF04219">
    <property type="entry name" value="DUF413"/>
    <property type="match status" value="1"/>
</dbReference>
<evidence type="ECO:0000250" key="1"/>
<evidence type="ECO:0000250" key="2">
    <source>
        <dbReference type="UniProtKB" id="P0ADN2"/>
    </source>
</evidence>
<evidence type="ECO:0000256" key="3">
    <source>
        <dbReference type="SAM" id="MobiDB-lite"/>
    </source>
</evidence>
<evidence type="ECO:0000305" key="4"/>
<proteinExistence type="inferred from homology"/>
<protein>
    <recommendedName>
        <fullName evidence="2">Macrodomain Ori protein</fullName>
    </recommendedName>
</protein>
<sequence length="112" mass="13078">MAESFTTTNRYFDNKHYPRGFSRHGDFTIKEAQLLERHGHAFNDLDLGKREPVTEEEKLFVAVCRGEREPVTDAERVWSKYMTRIKRPKRFHTLSGGKPQVEGAEDYTEADD</sequence>
<comment type="function">
    <text evidence="2">Involved in the organization of the Ori region of the chromosome into a macrodomain (MD) (By similarity). It constrains DNA mobility in the Ori macrodomain and limits long-distance DNA interactions with other chromosomal regions (By similarity).</text>
</comment>
<comment type="similarity">
    <text evidence="4">Belongs to the MaoP family.</text>
</comment>